<keyword id="KW-0067">ATP-binding</keyword>
<keyword id="KW-0414">Isoprene biosynthesis</keyword>
<keyword id="KW-0418">Kinase</keyword>
<keyword id="KW-0547">Nucleotide-binding</keyword>
<keyword id="KW-0808">Transferase</keyword>
<proteinExistence type="inferred from homology"/>
<reference key="1">
    <citation type="journal article" date="2011" name="Proc. Natl. Acad. Sci. U.S.A.">
        <title>Genomic anatomy of Escherichia coli O157:H7 outbreaks.</title>
        <authorList>
            <person name="Eppinger M."/>
            <person name="Mammel M.K."/>
            <person name="Leclerc J.E."/>
            <person name="Ravel J."/>
            <person name="Cebula T.A."/>
        </authorList>
    </citation>
    <scope>NUCLEOTIDE SEQUENCE [LARGE SCALE GENOMIC DNA]</scope>
    <source>
        <strain>EC4115 / EHEC</strain>
    </source>
</reference>
<feature type="chain" id="PRO_1000092083" description="4-diphosphocytidyl-2-C-methyl-D-erythritol kinase">
    <location>
        <begin position="1"/>
        <end position="283"/>
    </location>
</feature>
<feature type="active site" evidence="1">
    <location>
        <position position="10"/>
    </location>
</feature>
<feature type="active site" evidence="1">
    <location>
        <position position="141"/>
    </location>
</feature>
<feature type="binding site" evidence="1">
    <location>
        <begin position="99"/>
        <end position="109"/>
    </location>
    <ligand>
        <name>ATP</name>
        <dbReference type="ChEBI" id="CHEBI:30616"/>
    </ligand>
</feature>
<protein>
    <recommendedName>
        <fullName evidence="1">4-diphosphocytidyl-2-C-methyl-D-erythritol kinase</fullName>
        <shortName evidence="1">CMK</shortName>
        <ecNumber evidence="1">2.7.1.148</ecNumber>
    </recommendedName>
    <alternativeName>
        <fullName evidence="1">4-(cytidine-5'-diphospho)-2-C-methyl-D-erythritol kinase</fullName>
    </alternativeName>
</protein>
<comment type="function">
    <text evidence="1">Catalyzes the phosphorylation of the position 2 hydroxy group of 4-diphosphocytidyl-2C-methyl-D-erythritol.</text>
</comment>
<comment type="catalytic activity">
    <reaction evidence="1">
        <text>4-CDP-2-C-methyl-D-erythritol + ATP = 4-CDP-2-C-methyl-D-erythritol 2-phosphate + ADP + H(+)</text>
        <dbReference type="Rhea" id="RHEA:18437"/>
        <dbReference type="ChEBI" id="CHEBI:15378"/>
        <dbReference type="ChEBI" id="CHEBI:30616"/>
        <dbReference type="ChEBI" id="CHEBI:57823"/>
        <dbReference type="ChEBI" id="CHEBI:57919"/>
        <dbReference type="ChEBI" id="CHEBI:456216"/>
        <dbReference type="EC" id="2.7.1.148"/>
    </reaction>
</comment>
<comment type="pathway">
    <text evidence="1">Isoprenoid biosynthesis; isopentenyl diphosphate biosynthesis via DXP pathway; isopentenyl diphosphate from 1-deoxy-D-xylulose 5-phosphate: step 3/6.</text>
</comment>
<comment type="subunit">
    <text evidence="1">Homodimer.</text>
</comment>
<comment type="similarity">
    <text evidence="1">Belongs to the GHMP kinase family. IspE subfamily.</text>
</comment>
<gene>
    <name evidence="1" type="primary">ispE</name>
    <name type="ordered locus">ECH74115_1689</name>
</gene>
<sequence length="283" mass="30925">MRTQWPSPAKLNLFLYITGQRADGYHTLQTLFQFLDYGDTISIELRDDGDIRLLTPVEGVEHEDNLIVRAARLLMKTAADSGRLPTGSGANISIDKRLPMGGGLGGGSSNAATVLVALNHLWQCGLSMDELAEMGLTLGADVPVFVRGHAAFAEGVGEILTPVDPPEKWYLVAHPGVSIPTPVIFKDPELPRNTPKRSIETLLKCEFSNDCEVIARKRFREVDAVLSWLLEYAPSRLTGTGACVFAEFDTESEARQVLEQAPEWLNGFVAKGANLSPLHRAML</sequence>
<dbReference type="EC" id="2.7.1.148" evidence="1"/>
<dbReference type="EMBL" id="CP001164">
    <property type="protein sequence ID" value="ACI35149.1"/>
    <property type="molecule type" value="Genomic_DNA"/>
</dbReference>
<dbReference type="RefSeq" id="WP_001260332.1">
    <property type="nucleotide sequence ID" value="NC_011353.1"/>
</dbReference>
<dbReference type="SMR" id="B5YXM6"/>
<dbReference type="KEGG" id="ecf:ECH74115_1689"/>
<dbReference type="HOGENOM" id="CLU_053057_3_0_6"/>
<dbReference type="UniPathway" id="UPA00056">
    <property type="reaction ID" value="UER00094"/>
</dbReference>
<dbReference type="GO" id="GO:0050515">
    <property type="term" value="F:4-(cytidine 5'-diphospho)-2-C-methyl-D-erythritol kinase activity"/>
    <property type="evidence" value="ECO:0007669"/>
    <property type="project" value="UniProtKB-UniRule"/>
</dbReference>
<dbReference type="GO" id="GO:0005524">
    <property type="term" value="F:ATP binding"/>
    <property type="evidence" value="ECO:0007669"/>
    <property type="project" value="UniProtKB-UniRule"/>
</dbReference>
<dbReference type="GO" id="GO:0019288">
    <property type="term" value="P:isopentenyl diphosphate biosynthetic process, methylerythritol 4-phosphate pathway"/>
    <property type="evidence" value="ECO:0007669"/>
    <property type="project" value="UniProtKB-UniRule"/>
</dbReference>
<dbReference type="GO" id="GO:0016114">
    <property type="term" value="P:terpenoid biosynthetic process"/>
    <property type="evidence" value="ECO:0007669"/>
    <property type="project" value="InterPro"/>
</dbReference>
<dbReference type="FunFam" id="3.30.230.10:FF:000022">
    <property type="entry name" value="4-diphosphocytidyl-2-C-methyl-D-erythritol kinase"/>
    <property type="match status" value="1"/>
</dbReference>
<dbReference type="FunFam" id="3.30.70.890:FF:000004">
    <property type="entry name" value="4-diphosphocytidyl-2-C-methyl-D-erythritol kinase"/>
    <property type="match status" value="1"/>
</dbReference>
<dbReference type="Gene3D" id="3.30.230.10">
    <property type="match status" value="1"/>
</dbReference>
<dbReference type="Gene3D" id="3.30.70.890">
    <property type="entry name" value="GHMP kinase, C-terminal domain"/>
    <property type="match status" value="1"/>
</dbReference>
<dbReference type="HAMAP" id="MF_00061">
    <property type="entry name" value="IspE"/>
    <property type="match status" value="1"/>
</dbReference>
<dbReference type="InterPro" id="IPR013750">
    <property type="entry name" value="GHMP_kinase_C_dom"/>
</dbReference>
<dbReference type="InterPro" id="IPR036554">
    <property type="entry name" value="GHMP_kinase_C_sf"/>
</dbReference>
<dbReference type="InterPro" id="IPR006204">
    <property type="entry name" value="GHMP_kinase_N_dom"/>
</dbReference>
<dbReference type="InterPro" id="IPR004424">
    <property type="entry name" value="IspE"/>
</dbReference>
<dbReference type="InterPro" id="IPR020568">
    <property type="entry name" value="Ribosomal_Su5_D2-typ_SF"/>
</dbReference>
<dbReference type="InterPro" id="IPR014721">
    <property type="entry name" value="Ribsml_uS5_D2-typ_fold_subgr"/>
</dbReference>
<dbReference type="NCBIfam" id="TIGR00154">
    <property type="entry name" value="ispE"/>
    <property type="match status" value="1"/>
</dbReference>
<dbReference type="PANTHER" id="PTHR43527">
    <property type="entry name" value="4-DIPHOSPHOCYTIDYL-2-C-METHYL-D-ERYTHRITOL KINASE, CHLOROPLASTIC"/>
    <property type="match status" value="1"/>
</dbReference>
<dbReference type="PANTHER" id="PTHR43527:SF2">
    <property type="entry name" value="4-DIPHOSPHOCYTIDYL-2-C-METHYL-D-ERYTHRITOL KINASE, CHLOROPLASTIC"/>
    <property type="match status" value="1"/>
</dbReference>
<dbReference type="Pfam" id="PF08544">
    <property type="entry name" value="GHMP_kinases_C"/>
    <property type="match status" value="1"/>
</dbReference>
<dbReference type="Pfam" id="PF00288">
    <property type="entry name" value="GHMP_kinases_N"/>
    <property type="match status" value="1"/>
</dbReference>
<dbReference type="PIRSF" id="PIRSF010376">
    <property type="entry name" value="IspE"/>
    <property type="match status" value="1"/>
</dbReference>
<dbReference type="SUPFAM" id="SSF55060">
    <property type="entry name" value="GHMP Kinase, C-terminal domain"/>
    <property type="match status" value="1"/>
</dbReference>
<dbReference type="SUPFAM" id="SSF54211">
    <property type="entry name" value="Ribosomal protein S5 domain 2-like"/>
    <property type="match status" value="1"/>
</dbReference>
<accession>B5YXM6</accession>
<organism>
    <name type="scientific">Escherichia coli O157:H7 (strain EC4115 / EHEC)</name>
    <dbReference type="NCBI Taxonomy" id="444450"/>
    <lineage>
        <taxon>Bacteria</taxon>
        <taxon>Pseudomonadati</taxon>
        <taxon>Pseudomonadota</taxon>
        <taxon>Gammaproteobacteria</taxon>
        <taxon>Enterobacterales</taxon>
        <taxon>Enterobacteriaceae</taxon>
        <taxon>Escherichia</taxon>
    </lineage>
</organism>
<evidence type="ECO:0000255" key="1">
    <source>
        <dbReference type="HAMAP-Rule" id="MF_00061"/>
    </source>
</evidence>
<name>ISPE_ECO5E</name>